<feature type="chain" id="PRO_0000223656" description="Serine/threonine-protein phosphatase 4 regulatory subunit 3">
    <location>
        <begin position="1"/>
        <end position="842"/>
    </location>
</feature>
<proteinExistence type="inferred from homology"/>
<accession>Q6FR44</accession>
<protein>
    <recommendedName>
        <fullName>Serine/threonine-protein phosphatase 4 regulatory subunit 3</fullName>
        <shortName>PP4R3</shortName>
    </recommendedName>
</protein>
<gene>
    <name type="primary">PSY2</name>
    <name type="ordered locus">CAGL0I01056g</name>
</gene>
<sequence>MTLHSTNVTRTDSKRVKVYLLENNEWKDTGTGYCHGEVVSTELVDNKREEAFLLVTNENEPHQVLLRSKLEGNIEYQRQEETLIVWKDVEGKDIALSFEESLGCDTLCEFVVNVQRSIEPNISLVAVKSVDNGMGSIHEIITGPVALPSIETKQNTTTLLDALKILNDNTAFEYLKTETVEYVLKNNYIDLLIAHFHKAETEKIPRDLFLISNILKTMILYNQRDIIESLVEDKRIMGVVGILEYDTEFPTSKANHRKCLESEAPSFKEIIPLENEELKTVIKKCFRLQFLKDVVLVQFLDDNNLGLITDIILDLETCIIDSLQTDPFLDNLLQLYSKDKIYNSELTDESTDLIQKRKEGIKLLHQCIQMSRNLEHMDKSKFYKVLVKKGLFNLLDYAFNFEKDNNLRILATDTIIAIVEHDILLIHNVQKEISQHNDRQSLCLNGNQNEAKSSEANATVDLTLLEILSTILLTDNNPGLREQVVQALNTLLHPEGCIGDGFDNQLDNGLDFDDNILLRKDSNNLDDDFQEQTGMSKIPPFTLNSSQQLENQIAEYFKQFYIQIAPKLFGPLIENNCMSDEERQKYVNDDVLMIHLVKLVSFICSEHERLISRKFVLENGILDSISNLINPGYRLQLRLTALRCIKNIICLDDKYYHRHMISNELYSPIMKLMEEHLLEDNLANSALQDFFRIIASECHVFKDDSELFNYSDNAYNINATELHRRSGSIPSSNFTMLNKHINDKYPEVLDKLLYITFVKQLREQYKEHSKLLPNGKKRKISADNVNDFDGDKINNGKKGQLSKNKVMNYNSFETHIDDRASSTDSQPATCLVGSPAAYDNAV</sequence>
<keyword id="KW-0539">Nucleus</keyword>
<keyword id="KW-1185">Reference proteome</keyword>
<name>PP4R3_CANGA</name>
<reference key="1">
    <citation type="journal article" date="2004" name="Nature">
        <title>Genome evolution in yeasts.</title>
        <authorList>
            <person name="Dujon B."/>
            <person name="Sherman D."/>
            <person name="Fischer G."/>
            <person name="Durrens P."/>
            <person name="Casaregola S."/>
            <person name="Lafontaine I."/>
            <person name="de Montigny J."/>
            <person name="Marck C."/>
            <person name="Neuveglise C."/>
            <person name="Talla E."/>
            <person name="Goffard N."/>
            <person name="Frangeul L."/>
            <person name="Aigle M."/>
            <person name="Anthouard V."/>
            <person name="Babour A."/>
            <person name="Barbe V."/>
            <person name="Barnay S."/>
            <person name="Blanchin S."/>
            <person name="Beckerich J.-M."/>
            <person name="Beyne E."/>
            <person name="Bleykasten C."/>
            <person name="Boisrame A."/>
            <person name="Boyer J."/>
            <person name="Cattolico L."/>
            <person name="Confanioleri F."/>
            <person name="de Daruvar A."/>
            <person name="Despons L."/>
            <person name="Fabre E."/>
            <person name="Fairhead C."/>
            <person name="Ferry-Dumazet H."/>
            <person name="Groppi A."/>
            <person name="Hantraye F."/>
            <person name="Hennequin C."/>
            <person name="Jauniaux N."/>
            <person name="Joyet P."/>
            <person name="Kachouri R."/>
            <person name="Kerrest A."/>
            <person name="Koszul R."/>
            <person name="Lemaire M."/>
            <person name="Lesur I."/>
            <person name="Ma L."/>
            <person name="Muller H."/>
            <person name="Nicaud J.-M."/>
            <person name="Nikolski M."/>
            <person name="Oztas S."/>
            <person name="Ozier-Kalogeropoulos O."/>
            <person name="Pellenz S."/>
            <person name="Potier S."/>
            <person name="Richard G.-F."/>
            <person name="Straub M.-L."/>
            <person name="Suleau A."/>
            <person name="Swennen D."/>
            <person name="Tekaia F."/>
            <person name="Wesolowski-Louvel M."/>
            <person name="Westhof E."/>
            <person name="Wirth B."/>
            <person name="Zeniou-Meyer M."/>
            <person name="Zivanovic Y."/>
            <person name="Bolotin-Fukuhara M."/>
            <person name="Thierry A."/>
            <person name="Bouchier C."/>
            <person name="Caudron B."/>
            <person name="Scarpelli C."/>
            <person name="Gaillardin C."/>
            <person name="Weissenbach J."/>
            <person name="Wincker P."/>
            <person name="Souciet J.-L."/>
        </authorList>
    </citation>
    <scope>NUCLEOTIDE SEQUENCE [LARGE SCALE GENOMIC DNA]</scope>
    <source>
        <strain>ATCC 2001 / BCRC 20586 / JCM 3761 / NBRC 0622 / NRRL Y-65 / CBS 138</strain>
    </source>
</reference>
<comment type="function">
    <text evidence="1">Core regulatory subunit of the histone H2A phosphatase complex, which dephosphorylates H2AS128ph (gamma-H2A) that has been displaced from sites of DNA lesions in the double-stranded DNA break repair process. Dephosphorylation is necessary for efficient recovery from the DNA damage checkpoint (By similarity).</text>
</comment>
<comment type="subunit">
    <text evidence="1">Regulatory subunit 3 (R3) of the histone H2A phosphatase complex (HTP-C) consisting of PPH3, PSY2 and PSY4.</text>
</comment>
<comment type="subcellular location">
    <subcellularLocation>
        <location evidence="1">Nucleus</location>
    </subcellularLocation>
</comment>
<evidence type="ECO:0000250" key="1"/>
<dbReference type="EMBL" id="CR380955">
    <property type="protein sequence ID" value="CAG60237.1"/>
    <property type="molecule type" value="Genomic_DNA"/>
</dbReference>
<dbReference type="RefSeq" id="XP_447300.1">
    <property type="nucleotide sequence ID" value="XM_447300.1"/>
</dbReference>
<dbReference type="FunCoup" id="Q6FR44">
    <property type="interactions" value="970"/>
</dbReference>
<dbReference type="STRING" id="284593.Q6FR44"/>
<dbReference type="EnsemblFungi" id="CAGL0I01056g-T">
    <property type="protein sequence ID" value="CAGL0I01056g-T-p1"/>
    <property type="gene ID" value="CAGL0I01056g"/>
</dbReference>
<dbReference type="KEGG" id="cgr:2888910"/>
<dbReference type="CGD" id="CAL0132566">
    <property type="gene designation" value="CAGL0I01056g"/>
</dbReference>
<dbReference type="VEuPathDB" id="FungiDB:CAGL0I01056g"/>
<dbReference type="eggNOG" id="KOG2175">
    <property type="taxonomic scope" value="Eukaryota"/>
</dbReference>
<dbReference type="HOGENOM" id="CLU_004909_4_0_1"/>
<dbReference type="InParanoid" id="Q6FR44"/>
<dbReference type="OMA" id="YHRYMIS"/>
<dbReference type="Proteomes" id="UP000002428">
    <property type="component" value="Chromosome I"/>
</dbReference>
<dbReference type="GO" id="GO:0005654">
    <property type="term" value="C:nucleoplasm"/>
    <property type="evidence" value="ECO:0007669"/>
    <property type="project" value="TreeGrafter"/>
</dbReference>
<dbReference type="GO" id="GO:0030289">
    <property type="term" value="C:protein phosphatase 4 complex"/>
    <property type="evidence" value="ECO:0007669"/>
    <property type="project" value="EnsemblFungi"/>
</dbReference>
<dbReference type="GO" id="GO:0072542">
    <property type="term" value="F:protein phosphatase activator activity"/>
    <property type="evidence" value="ECO:0007669"/>
    <property type="project" value="TreeGrafter"/>
</dbReference>
<dbReference type="GO" id="GO:0006974">
    <property type="term" value="P:DNA damage response"/>
    <property type="evidence" value="ECO:0007669"/>
    <property type="project" value="EnsemblFungi"/>
</dbReference>
<dbReference type="GO" id="GO:0051598">
    <property type="term" value="P:meiotic recombination checkpoint signaling"/>
    <property type="evidence" value="ECO:0007669"/>
    <property type="project" value="EnsemblFungi"/>
</dbReference>
<dbReference type="GO" id="GO:2000002">
    <property type="term" value="P:negative regulation of DNA damage checkpoint"/>
    <property type="evidence" value="ECO:0007669"/>
    <property type="project" value="EnsemblFungi"/>
</dbReference>
<dbReference type="GO" id="GO:1902660">
    <property type="term" value="P:negative regulation of glucose mediated signaling pathway"/>
    <property type="evidence" value="ECO:0007669"/>
    <property type="project" value="EnsemblFungi"/>
</dbReference>
<dbReference type="GO" id="GO:2001034">
    <property type="term" value="P:positive regulation of double-strand break repair via nonhomologous end joining"/>
    <property type="evidence" value="ECO:0007669"/>
    <property type="project" value="EnsemblFungi"/>
</dbReference>
<dbReference type="FunFam" id="2.30.29.30:FF:000455">
    <property type="entry name" value="Psy2p"/>
    <property type="match status" value="1"/>
</dbReference>
<dbReference type="Gene3D" id="2.30.29.30">
    <property type="entry name" value="Pleckstrin-homology domain (PH domain)/Phosphotyrosine-binding domain (PTB)"/>
    <property type="match status" value="1"/>
</dbReference>
<dbReference type="InterPro" id="IPR016024">
    <property type="entry name" value="ARM-type_fold"/>
</dbReference>
<dbReference type="InterPro" id="IPR055236">
    <property type="entry name" value="EVH1_PP4R3"/>
</dbReference>
<dbReference type="InterPro" id="IPR006887">
    <property type="entry name" value="P4R3-like_central_dom"/>
</dbReference>
<dbReference type="InterPro" id="IPR011993">
    <property type="entry name" value="PH-like_dom_sf"/>
</dbReference>
<dbReference type="InterPro" id="IPR051137">
    <property type="entry name" value="PP4R3-like"/>
</dbReference>
<dbReference type="PANTHER" id="PTHR23318">
    <property type="entry name" value="ATP SYNTHASE GAMMA-RELATED"/>
    <property type="match status" value="1"/>
</dbReference>
<dbReference type="PANTHER" id="PTHR23318:SF0">
    <property type="entry name" value="SERINE_THREONINE-PROTEIN PHOSPHATASE 4 REGULATORY SUBUNIT 3"/>
    <property type="match status" value="1"/>
</dbReference>
<dbReference type="Pfam" id="PF22972">
    <property type="entry name" value="EVH1_PP4R3"/>
    <property type="match status" value="1"/>
</dbReference>
<dbReference type="Pfam" id="PF04802">
    <property type="entry name" value="PP4R3"/>
    <property type="match status" value="1"/>
</dbReference>
<dbReference type="SUPFAM" id="SSF48371">
    <property type="entry name" value="ARM repeat"/>
    <property type="match status" value="1"/>
</dbReference>
<dbReference type="SUPFAM" id="SSF50729">
    <property type="entry name" value="PH domain-like"/>
    <property type="match status" value="1"/>
</dbReference>
<organism>
    <name type="scientific">Candida glabrata (strain ATCC 2001 / BCRC 20586 / JCM 3761 / NBRC 0622 / NRRL Y-65 / CBS 138)</name>
    <name type="common">Yeast</name>
    <name type="synonym">Nakaseomyces glabratus</name>
    <dbReference type="NCBI Taxonomy" id="284593"/>
    <lineage>
        <taxon>Eukaryota</taxon>
        <taxon>Fungi</taxon>
        <taxon>Dikarya</taxon>
        <taxon>Ascomycota</taxon>
        <taxon>Saccharomycotina</taxon>
        <taxon>Saccharomycetes</taxon>
        <taxon>Saccharomycetales</taxon>
        <taxon>Saccharomycetaceae</taxon>
        <taxon>Nakaseomyces</taxon>
    </lineage>
</organism>